<keyword id="KW-0004">4Fe-4S</keyword>
<keyword id="KW-0408">Iron</keyword>
<keyword id="KW-0411">Iron-sulfur</keyword>
<keyword id="KW-0479">Metal-binding</keyword>
<keyword id="KW-0560">Oxidoreductase</keyword>
<keyword id="KW-0884">PQQ biosynthesis</keyword>
<keyword id="KW-1185">Reference proteome</keyword>
<keyword id="KW-0949">S-adenosyl-L-methionine</keyword>
<accession>Q9L3B0</accession>
<accession>Q5FS91</accession>
<comment type="function">
    <text evidence="1">Catalyzes the cross-linking of a glutamate residue and a tyrosine residue in the PqqA protein as part of the biosynthesis of pyrroloquinoline quinone (PQQ).</text>
</comment>
<comment type="catalytic activity">
    <reaction evidence="1">
        <text>[PQQ precursor protein] + S-adenosyl-L-methionine = E-Y cross-linked-[PQQ precursor protein] + 5'-deoxyadenosine + L-methionine + H(+)</text>
        <dbReference type="Rhea" id="RHEA:56836"/>
        <dbReference type="Rhea" id="RHEA-COMP:14800"/>
        <dbReference type="Rhea" id="RHEA-COMP:14801"/>
        <dbReference type="ChEBI" id="CHEBI:15378"/>
        <dbReference type="ChEBI" id="CHEBI:17319"/>
        <dbReference type="ChEBI" id="CHEBI:57844"/>
        <dbReference type="ChEBI" id="CHEBI:59789"/>
        <dbReference type="ChEBI" id="CHEBI:141026"/>
        <dbReference type="ChEBI" id="CHEBI:141027"/>
        <dbReference type="EC" id="1.21.98.4"/>
    </reaction>
</comment>
<comment type="cofactor">
    <cofactor evidence="1">
        <name>[4Fe-4S] cluster</name>
        <dbReference type="ChEBI" id="CHEBI:49883"/>
    </cofactor>
    <text evidence="1">Binds 1 [4Fe-4S] cluster. The cluster is coordinated with 3 cysteines and an exchangeable S-adenosyl-L-methionine.</text>
</comment>
<comment type="pathway">
    <text evidence="1">Cofactor biosynthesis; pyrroloquinoline quinone biosynthesis.</text>
</comment>
<comment type="subunit">
    <text evidence="1">Interacts with PqqD. The interaction is necessary for activity of PqqE.</text>
</comment>
<comment type="similarity">
    <text evidence="1">Belongs to the radical SAM superfamily. PqqE family.</text>
</comment>
<feature type="chain" id="PRO_0000219939" description="PqqA peptide cyclase">
    <location>
        <begin position="1"/>
        <end position="358"/>
    </location>
</feature>
<feature type="domain" description="Radical SAM core" evidence="2">
    <location>
        <begin position="4"/>
        <end position="219"/>
    </location>
</feature>
<feature type="binding site" evidence="1">
    <location>
        <position position="18"/>
    </location>
    <ligand>
        <name>[4Fe-4S] cluster</name>
        <dbReference type="ChEBI" id="CHEBI:49883"/>
        <note>4Fe-4S-S-AdoMet</note>
    </ligand>
</feature>
<feature type="binding site" evidence="1">
    <location>
        <position position="22"/>
    </location>
    <ligand>
        <name>[4Fe-4S] cluster</name>
        <dbReference type="ChEBI" id="CHEBI:49883"/>
        <note>4Fe-4S-S-AdoMet</note>
    </ligand>
</feature>
<feature type="binding site" evidence="1">
    <location>
        <position position="25"/>
    </location>
    <ligand>
        <name>[4Fe-4S] cluster</name>
        <dbReference type="ChEBI" id="CHEBI:49883"/>
        <note>4Fe-4S-S-AdoMet</note>
    </ligand>
</feature>
<feature type="sequence conflict" description="In Ref. 1; CAB83201." evidence="3" ref="1">
    <original>A</original>
    <variation>G</variation>
    <location>
        <position position="120"/>
    </location>
</feature>
<feature type="sequence conflict" description="In Ref. 1; CAB83201." evidence="3" ref="1">
    <original>V</original>
    <variation>I</variation>
    <location>
        <position position="136"/>
    </location>
</feature>
<feature type="sequence conflict" description="In Ref. 1; CAB83201." evidence="3" ref="1">
    <original>E</original>
    <variation>D</variation>
    <location>
        <position position="194"/>
    </location>
</feature>
<feature type="sequence conflict" description="In Ref. 1; CAB83201." evidence="3" ref="1">
    <original>V</original>
    <variation>I</variation>
    <location>
        <position position="221"/>
    </location>
</feature>
<feature type="sequence conflict" description="In Ref. 1; CAB83201." evidence="3" ref="1">
    <original>A</original>
    <variation>S</variation>
    <location>
        <position position="266"/>
    </location>
</feature>
<feature type="sequence conflict" description="In Ref. 1; CAB83201." evidence="3" ref="1">
    <original>Q</original>
    <variation>K</variation>
    <location>
        <position position="271"/>
    </location>
</feature>
<feature type="sequence conflict" description="In Ref. 1; CAB83201." evidence="3" ref="1">
    <original>M</original>
    <variation>L</variation>
    <location>
        <position position="316"/>
    </location>
</feature>
<feature type="sequence conflict" description="In Ref. 1; CAB83201." evidence="3" ref="1">
    <original>V</original>
    <variation>I</variation>
    <location>
        <position position="328"/>
    </location>
</feature>
<feature type="sequence conflict" description="In Ref. 1; CAB83201." evidence="3" ref="1">
    <original>YHDRVEQAVENNMQPESTLFYRRYT</original>
    <variation>FTILWNRQGVKKQNLSIGGGKVRSVF</variation>
    <location>
        <begin position="334"/>
        <end position="358"/>
    </location>
</feature>
<sequence>MTLPSPPMSLLAELTHRCPLSCPYCSNPLELERKAAELDTATWTAVLEQAAELGVLQVHFSGGEPMARPDLVELVSVARRLNLYSNLITSGVLLDEPKLEALDRAGLDHIQLSFQDVTEAGAERIGGLKGAQARKVAAARLIRASGIPMTLNFVVHRENVARIPEMFALARELGAGRVEIAHTQYYGWGLKNREALLPSRDQLEESTRAVEAERAKGGLSVDYVTPDYHADRPKPCMGGWGQRFVNVTPSGRVLPCHAAEIIPDVAFPNVQDVTLSEIWNISPLFNMFRGTDWMPEPCRSCERKERDWGGCRCQAMALTGNAANTDPVCSLSPYHDRVEQAVENNMQPESTLFYRRYT</sequence>
<name>PQQE_GLUOX</name>
<dbReference type="EC" id="1.21.98.4" evidence="1"/>
<dbReference type="EMBL" id="AJ277117">
    <property type="protein sequence ID" value="CAB83201.1"/>
    <property type="molecule type" value="Genomic_DNA"/>
</dbReference>
<dbReference type="EMBL" id="CP000009">
    <property type="protein sequence ID" value="AAW60755.1"/>
    <property type="molecule type" value="Genomic_DNA"/>
</dbReference>
<dbReference type="RefSeq" id="WP_011252550.1">
    <property type="nucleotide sequence ID" value="NC_006677.1"/>
</dbReference>
<dbReference type="SMR" id="Q9L3B0"/>
<dbReference type="STRING" id="290633.GOX0983"/>
<dbReference type="KEGG" id="gox:GOX0983"/>
<dbReference type="eggNOG" id="COG0535">
    <property type="taxonomic scope" value="Bacteria"/>
</dbReference>
<dbReference type="HOGENOM" id="CLU_009273_4_7_5"/>
<dbReference type="UniPathway" id="UPA00539"/>
<dbReference type="Proteomes" id="UP000006375">
    <property type="component" value="Chromosome"/>
</dbReference>
<dbReference type="GO" id="GO:0051539">
    <property type="term" value="F:4 iron, 4 sulfur cluster binding"/>
    <property type="evidence" value="ECO:0007669"/>
    <property type="project" value="UniProtKB-KW"/>
</dbReference>
<dbReference type="GO" id="GO:0009975">
    <property type="term" value="F:cyclase activity"/>
    <property type="evidence" value="ECO:0007669"/>
    <property type="project" value="UniProtKB-UniRule"/>
</dbReference>
<dbReference type="GO" id="GO:0005506">
    <property type="term" value="F:iron ion binding"/>
    <property type="evidence" value="ECO:0007669"/>
    <property type="project" value="UniProtKB-UniRule"/>
</dbReference>
<dbReference type="GO" id="GO:0016491">
    <property type="term" value="F:oxidoreductase activity"/>
    <property type="evidence" value="ECO:0007669"/>
    <property type="project" value="UniProtKB-KW"/>
</dbReference>
<dbReference type="GO" id="GO:1904047">
    <property type="term" value="F:S-adenosyl-L-methionine binding"/>
    <property type="evidence" value="ECO:0007669"/>
    <property type="project" value="UniProtKB-UniRule"/>
</dbReference>
<dbReference type="GO" id="GO:0018189">
    <property type="term" value="P:pyrroloquinoline quinone biosynthetic process"/>
    <property type="evidence" value="ECO:0007669"/>
    <property type="project" value="UniProtKB-UniRule"/>
</dbReference>
<dbReference type="CDD" id="cd01335">
    <property type="entry name" value="Radical_SAM"/>
    <property type="match status" value="1"/>
</dbReference>
<dbReference type="CDD" id="cd21119">
    <property type="entry name" value="SPASM_PqqE"/>
    <property type="match status" value="1"/>
</dbReference>
<dbReference type="Gene3D" id="3.20.20.70">
    <property type="entry name" value="Aldolase class I"/>
    <property type="match status" value="1"/>
</dbReference>
<dbReference type="HAMAP" id="MF_00660">
    <property type="entry name" value="PqqE"/>
    <property type="match status" value="1"/>
</dbReference>
<dbReference type="InterPro" id="IPR023885">
    <property type="entry name" value="4Fe4S-binding_SPASM_dom"/>
</dbReference>
<dbReference type="InterPro" id="IPR013785">
    <property type="entry name" value="Aldolase_TIM"/>
</dbReference>
<dbReference type="InterPro" id="IPR006638">
    <property type="entry name" value="Elp3/MiaA/NifB-like_rSAM"/>
</dbReference>
<dbReference type="InterPro" id="IPR000385">
    <property type="entry name" value="MoaA_NifB_PqqE_Fe-S-bd_CS"/>
</dbReference>
<dbReference type="InterPro" id="IPR011843">
    <property type="entry name" value="PQQ_synth_PqqE_bac"/>
</dbReference>
<dbReference type="InterPro" id="IPR017200">
    <property type="entry name" value="PqqE-like"/>
</dbReference>
<dbReference type="InterPro" id="IPR050377">
    <property type="entry name" value="Radical_SAM_PqqE_MftC-like"/>
</dbReference>
<dbReference type="InterPro" id="IPR007197">
    <property type="entry name" value="rSAM"/>
</dbReference>
<dbReference type="NCBIfam" id="TIGR02109">
    <property type="entry name" value="PQQ_syn_pqqE"/>
    <property type="match status" value="1"/>
</dbReference>
<dbReference type="NCBIfam" id="TIGR04085">
    <property type="entry name" value="rSAM_more_4Fe4S"/>
    <property type="match status" value="1"/>
</dbReference>
<dbReference type="PANTHER" id="PTHR11228:SF7">
    <property type="entry name" value="PQQA PEPTIDE CYCLASE"/>
    <property type="match status" value="1"/>
</dbReference>
<dbReference type="PANTHER" id="PTHR11228">
    <property type="entry name" value="RADICAL SAM DOMAIN PROTEIN"/>
    <property type="match status" value="1"/>
</dbReference>
<dbReference type="Pfam" id="PF13353">
    <property type="entry name" value="Fer4_12"/>
    <property type="match status" value="1"/>
</dbReference>
<dbReference type="Pfam" id="PF04055">
    <property type="entry name" value="Radical_SAM"/>
    <property type="match status" value="1"/>
</dbReference>
<dbReference type="Pfam" id="PF13186">
    <property type="entry name" value="SPASM"/>
    <property type="match status" value="1"/>
</dbReference>
<dbReference type="PIRSF" id="PIRSF037420">
    <property type="entry name" value="PQQ_syn_pqqE"/>
    <property type="match status" value="1"/>
</dbReference>
<dbReference type="SFLD" id="SFLDF00280">
    <property type="entry name" value="coenzyme_PQQ_synthesis_protein"/>
    <property type="match status" value="1"/>
</dbReference>
<dbReference type="SFLD" id="SFLDS00029">
    <property type="entry name" value="Radical_SAM"/>
    <property type="match status" value="1"/>
</dbReference>
<dbReference type="SMART" id="SM00729">
    <property type="entry name" value="Elp3"/>
    <property type="match status" value="1"/>
</dbReference>
<dbReference type="SUPFAM" id="SSF102114">
    <property type="entry name" value="Radical SAM enzymes"/>
    <property type="match status" value="1"/>
</dbReference>
<dbReference type="PROSITE" id="PS01305">
    <property type="entry name" value="MOAA_NIFB_PQQE"/>
    <property type="match status" value="1"/>
</dbReference>
<dbReference type="PROSITE" id="PS51918">
    <property type="entry name" value="RADICAL_SAM"/>
    <property type="match status" value="1"/>
</dbReference>
<reference key="1">
    <citation type="journal article" date="2000" name="FEMS Microbiol. Lett.">
        <title>The pyrroloquinoline quinone synthesis genes of Gluconobacter oxydans.</title>
        <authorList>
            <person name="Felder M."/>
            <person name="Gupta A."/>
            <person name="Verma V."/>
            <person name="Kumar A."/>
            <person name="Qazi G.N."/>
            <person name="Cullum J."/>
        </authorList>
    </citation>
    <scope>NUCLEOTIDE SEQUENCE [GENOMIC DNA]</scope>
    <source>
        <strain>ATCC 9937 / LMG 1404 / NCIMB 8084</strain>
    </source>
</reference>
<reference key="2">
    <citation type="journal article" date="2005" name="Nat. Biotechnol.">
        <title>Complete genome sequence of the acetic acid bacterium Gluconobacter oxydans.</title>
        <authorList>
            <person name="Prust C."/>
            <person name="Hoffmeister M."/>
            <person name="Liesegang H."/>
            <person name="Wiezer A."/>
            <person name="Fricke W.F."/>
            <person name="Ehrenreich A."/>
            <person name="Gottschalk G."/>
            <person name="Deppenmeier U."/>
        </authorList>
    </citation>
    <scope>NUCLEOTIDE SEQUENCE [LARGE SCALE GENOMIC DNA]</scope>
    <source>
        <strain>621H</strain>
    </source>
</reference>
<protein>
    <recommendedName>
        <fullName evidence="1">PqqA peptide cyclase</fullName>
        <ecNumber evidence="1">1.21.98.4</ecNumber>
    </recommendedName>
    <alternativeName>
        <fullName evidence="1">Coenzyme PQQ synthesis protein E</fullName>
    </alternativeName>
    <alternativeName>
        <fullName evidence="1">Pyrroloquinoline quinone biosynthesis protein E</fullName>
    </alternativeName>
</protein>
<gene>
    <name evidence="1" type="primary">pqqE</name>
    <name type="ordered locus">GOX0983</name>
</gene>
<organism>
    <name type="scientific">Gluconobacter oxydans (strain 621H)</name>
    <name type="common">Gluconobacter suboxydans</name>
    <dbReference type="NCBI Taxonomy" id="290633"/>
    <lineage>
        <taxon>Bacteria</taxon>
        <taxon>Pseudomonadati</taxon>
        <taxon>Pseudomonadota</taxon>
        <taxon>Alphaproteobacteria</taxon>
        <taxon>Acetobacterales</taxon>
        <taxon>Acetobacteraceae</taxon>
        <taxon>Gluconobacter</taxon>
    </lineage>
</organism>
<proteinExistence type="inferred from homology"/>
<evidence type="ECO:0000255" key="1">
    <source>
        <dbReference type="HAMAP-Rule" id="MF_00660"/>
    </source>
</evidence>
<evidence type="ECO:0000255" key="2">
    <source>
        <dbReference type="PROSITE-ProRule" id="PRU01266"/>
    </source>
</evidence>
<evidence type="ECO:0000305" key="3"/>